<comment type="function">
    <text>Guanine nucleotide-binding proteins (G proteins) are involved as modulators or transducers in various transmembrane signaling systems. The G(o) protein function is not clear.</text>
</comment>
<comment type="subunit">
    <text>G proteins are composed of 3 units; alpha, beta and gamma. The alpha chain contains the guanine nucleotide binding site.</text>
</comment>
<comment type="similarity">
    <text evidence="5">Belongs to the G-alpha family. G(i/o/t/z) subfamily.</text>
</comment>
<name>GNAO_GEOCY</name>
<feature type="initiator methionine" description="Removed" evidence="1">
    <location>
        <position position="1"/>
    </location>
</feature>
<feature type="chain" id="PRO_0000203709" description="Guanine nucleotide-binding protein G(o) subunit alpha">
    <location>
        <begin position="2"/>
        <end position="359"/>
    </location>
</feature>
<feature type="domain" description="G-alpha" evidence="3">
    <location>
        <begin position="34"/>
        <end position="359"/>
    </location>
</feature>
<feature type="region of interest" description="Disordered" evidence="4">
    <location>
        <begin position="1"/>
        <end position="26"/>
    </location>
</feature>
<feature type="region of interest" description="G1 motif" evidence="3">
    <location>
        <begin position="37"/>
        <end position="50"/>
    </location>
</feature>
<feature type="region of interest" description="G2 motif" evidence="3">
    <location>
        <begin position="176"/>
        <end position="184"/>
    </location>
</feature>
<feature type="region of interest" description="G3 motif" evidence="3">
    <location>
        <begin position="199"/>
        <end position="208"/>
    </location>
</feature>
<feature type="region of interest" description="G4 motif" evidence="3">
    <location>
        <begin position="268"/>
        <end position="275"/>
    </location>
</feature>
<feature type="region of interest" description="G5 motif" evidence="3">
    <location>
        <begin position="329"/>
        <end position="334"/>
    </location>
</feature>
<feature type="binding site" evidence="1">
    <location>
        <begin position="42"/>
        <end position="49"/>
    </location>
    <ligand>
        <name>GTP</name>
        <dbReference type="ChEBI" id="CHEBI:37565"/>
    </ligand>
</feature>
<feature type="binding site" evidence="1">
    <location>
        <position position="49"/>
    </location>
    <ligand>
        <name>Mg(2+)</name>
        <dbReference type="ChEBI" id="CHEBI:18420"/>
    </ligand>
</feature>
<feature type="binding site" evidence="1">
    <location>
        <begin position="178"/>
        <end position="184"/>
    </location>
    <ligand>
        <name>GTP</name>
        <dbReference type="ChEBI" id="CHEBI:37565"/>
    </ligand>
</feature>
<feature type="binding site" evidence="1">
    <location>
        <position position="184"/>
    </location>
    <ligand>
        <name>Mg(2+)</name>
        <dbReference type="ChEBI" id="CHEBI:18420"/>
    </ligand>
</feature>
<feature type="binding site" evidence="1">
    <location>
        <begin position="203"/>
        <end position="207"/>
    </location>
    <ligand>
        <name>GTP</name>
        <dbReference type="ChEBI" id="CHEBI:37565"/>
    </ligand>
</feature>
<feature type="binding site" evidence="1">
    <location>
        <begin position="272"/>
        <end position="275"/>
    </location>
    <ligand>
        <name>GTP</name>
        <dbReference type="ChEBI" id="CHEBI:37565"/>
    </ligand>
</feature>
<feature type="binding site" evidence="1">
    <location>
        <position position="331"/>
    </location>
    <ligand>
        <name>GTP</name>
        <dbReference type="ChEBI" id="CHEBI:37565"/>
    </ligand>
</feature>
<feature type="lipid moiety-binding region" description="N-myristoyl glycine" evidence="2">
    <location>
        <position position="2"/>
    </location>
</feature>
<feature type="lipid moiety-binding region" description="S-palmitoyl cysteine" evidence="2">
    <location>
        <position position="4"/>
    </location>
</feature>
<keyword id="KW-0342">GTP-binding</keyword>
<keyword id="KW-0449">Lipoprotein</keyword>
<keyword id="KW-0460">Magnesium</keyword>
<keyword id="KW-0479">Metal-binding</keyword>
<keyword id="KW-0519">Myristate</keyword>
<keyword id="KW-0547">Nucleotide-binding</keyword>
<keyword id="KW-0564">Palmitate</keyword>
<keyword id="KW-0807">Transducer</keyword>
<proteinExistence type="evidence at transcript level"/>
<protein>
    <recommendedName>
        <fullName>Guanine nucleotide-binding protein G(o) subunit alpha</fullName>
    </recommendedName>
</protein>
<accession>Q9XZV3</accession>
<sequence>MGGCVSATPEEREAKTRSSVIDRQQRQDARQYENTIKILLLGAGESGKSTVVKQMKIIHGDGYSQTEXRSFKSVIYGNLAASMRVVLNAMEKLGIPYGNQASQEQARVILSLSNSLSSYESFPPDVTSAFISLWRDAGVQECFSRAYEYQLNDSAPYYFQNMDRLLREDYVPDEQDVLRSRVQTTGIIETSFRVKQLTYRVVDVGGQRSERRKWIQCFDDVRAVLFVCALSGYDMTLFEDGKTNRLEESLNLFQAICNNKFFVKTSMILFLNKADLFRDKITNSDRHLRLYFTQYTGPDRDVEAASRFIQSEFMERNLNKQKIIYPHLTTATDTTNIKVVFGVVLDTIIRENLEAANLL</sequence>
<reference key="1">
    <citation type="journal article" date="1998" name="Biochim. Biophys. Acta">
        <title>Evolutionary analysis of G-proteins in early metazoans: cloning of alpha- and beta-subunits from the sponge Geodia cydonium.</title>
        <authorList>
            <person name="Seack J."/>
            <person name="Kruse M."/>
            <person name="Mueller W.E.G."/>
        </authorList>
    </citation>
    <scope>NUCLEOTIDE SEQUENCE [MRNA]</scope>
</reference>
<evidence type="ECO:0000250" key="1"/>
<evidence type="ECO:0000255" key="2"/>
<evidence type="ECO:0000255" key="3">
    <source>
        <dbReference type="PROSITE-ProRule" id="PRU01230"/>
    </source>
</evidence>
<evidence type="ECO:0000256" key="4">
    <source>
        <dbReference type="SAM" id="MobiDB-lite"/>
    </source>
</evidence>
<evidence type="ECO:0000305" key="5"/>
<dbReference type="EMBL" id="Y14247">
    <property type="protein sequence ID" value="CAB43526.1"/>
    <property type="molecule type" value="mRNA"/>
</dbReference>
<dbReference type="GO" id="GO:0005737">
    <property type="term" value="C:cytoplasm"/>
    <property type="evidence" value="ECO:0007669"/>
    <property type="project" value="TreeGrafter"/>
</dbReference>
<dbReference type="GO" id="GO:0005834">
    <property type="term" value="C:heterotrimeric G-protein complex"/>
    <property type="evidence" value="ECO:0007669"/>
    <property type="project" value="TreeGrafter"/>
</dbReference>
<dbReference type="GO" id="GO:0001664">
    <property type="term" value="F:G protein-coupled receptor binding"/>
    <property type="evidence" value="ECO:0007669"/>
    <property type="project" value="TreeGrafter"/>
</dbReference>
<dbReference type="GO" id="GO:0031683">
    <property type="term" value="F:G-protein beta/gamma-subunit complex binding"/>
    <property type="evidence" value="ECO:0007669"/>
    <property type="project" value="InterPro"/>
</dbReference>
<dbReference type="GO" id="GO:0005525">
    <property type="term" value="F:GTP binding"/>
    <property type="evidence" value="ECO:0007669"/>
    <property type="project" value="UniProtKB-KW"/>
</dbReference>
<dbReference type="GO" id="GO:0003924">
    <property type="term" value="F:GTPase activity"/>
    <property type="evidence" value="ECO:0007669"/>
    <property type="project" value="InterPro"/>
</dbReference>
<dbReference type="GO" id="GO:0046872">
    <property type="term" value="F:metal ion binding"/>
    <property type="evidence" value="ECO:0007669"/>
    <property type="project" value="UniProtKB-KW"/>
</dbReference>
<dbReference type="GO" id="GO:0007188">
    <property type="term" value="P:adenylate cyclase-modulating G protein-coupled receptor signaling pathway"/>
    <property type="evidence" value="ECO:0007669"/>
    <property type="project" value="TreeGrafter"/>
</dbReference>
<dbReference type="CDD" id="cd00066">
    <property type="entry name" value="G-alpha"/>
    <property type="match status" value="1"/>
</dbReference>
<dbReference type="FunFam" id="3.40.50.300:FF:002307">
    <property type="entry name" value="Guanine nucleotide-binding protein G(k) subunit alpha"/>
    <property type="match status" value="1"/>
</dbReference>
<dbReference type="FunFam" id="1.10.400.10:FF:000007">
    <property type="entry name" value="Guanine nucleotide-binding protein subunit alpha"/>
    <property type="match status" value="1"/>
</dbReference>
<dbReference type="FunFam" id="3.40.50.300:FF:000692">
    <property type="entry name" value="Guanine nucleotide-binding protein subunit alpha"/>
    <property type="match status" value="1"/>
</dbReference>
<dbReference type="Gene3D" id="1.10.400.10">
    <property type="entry name" value="GI Alpha 1, domain 2-like"/>
    <property type="match status" value="1"/>
</dbReference>
<dbReference type="Gene3D" id="3.40.50.300">
    <property type="entry name" value="P-loop containing nucleotide triphosphate hydrolases"/>
    <property type="match status" value="1"/>
</dbReference>
<dbReference type="InterPro" id="IPR001019">
    <property type="entry name" value="Gprotein_alpha_su"/>
</dbReference>
<dbReference type="InterPro" id="IPR011025">
    <property type="entry name" value="GproteinA_insert"/>
</dbReference>
<dbReference type="InterPro" id="IPR027417">
    <property type="entry name" value="P-loop_NTPase"/>
</dbReference>
<dbReference type="PANTHER" id="PTHR10218">
    <property type="entry name" value="GTP-BINDING PROTEIN ALPHA SUBUNIT"/>
    <property type="match status" value="1"/>
</dbReference>
<dbReference type="PANTHER" id="PTHR10218:SF231">
    <property type="entry name" value="GUANINE NUCLEOTIDE BINDING PROTEIN (G PROTEIN) ALPHA V1"/>
    <property type="match status" value="1"/>
</dbReference>
<dbReference type="Pfam" id="PF00503">
    <property type="entry name" value="G-alpha"/>
    <property type="match status" value="1"/>
</dbReference>
<dbReference type="PRINTS" id="PR00318">
    <property type="entry name" value="GPROTEINA"/>
</dbReference>
<dbReference type="SMART" id="SM00275">
    <property type="entry name" value="G_alpha"/>
    <property type="match status" value="1"/>
</dbReference>
<dbReference type="SUPFAM" id="SSF52540">
    <property type="entry name" value="P-loop containing nucleoside triphosphate hydrolases"/>
    <property type="match status" value="1"/>
</dbReference>
<dbReference type="SUPFAM" id="SSF47895">
    <property type="entry name" value="Transducin (alpha subunit), insertion domain"/>
    <property type="match status" value="1"/>
</dbReference>
<dbReference type="PROSITE" id="PS51882">
    <property type="entry name" value="G_ALPHA"/>
    <property type="match status" value="1"/>
</dbReference>
<organism>
    <name type="scientific">Geodia cydonium</name>
    <name type="common">Sponge</name>
    <dbReference type="NCBI Taxonomy" id="6047"/>
    <lineage>
        <taxon>Eukaryota</taxon>
        <taxon>Metazoa</taxon>
        <taxon>Porifera</taxon>
        <taxon>Demospongiae</taxon>
        <taxon>Heteroscleromorpha</taxon>
        <taxon>Tetractinellida</taxon>
        <taxon>Astrophorina</taxon>
        <taxon>Geodiidae</taxon>
        <taxon>Geodia</taxon>
    </lineage>
</organism>